<protein>
    <recommendedName>
        <fullName>Uncharacterized protein Rv1366</fullName>
    </recommendedName>
</protein>
<dbReference type="EMBL" id="AL123456">
    <property type="protein sequence ID" value="CCP44124.1"/>
    <property type="molecule type" value="Genomic_DNA"/>
</dbReference>
<dbReference type="PIR" id="E70742">
    <property type="entry name" value="E70742"/>
</dbReference>
<dbReference type="RefSeq" id="NP_215882.1">
    <property type="nucleotide sequence ID" value="NC_000962.3"/>
</dbReference>
<dbReference type="RefSeq" id="WP_003407164.1">
    <property type="nucleotide sequence ID" value="NZ_NVQJ01000031.1"/>
</dbReference>
<dbReference type="SMR" id="P9WLZ5"/>
<dbReference type="STRING" id="83332.Rv1366"/>
<dbReference type="PaxDb" id="83332-Rv1366"/>
<dbReference type="DNASU" id="886805"/>
<dbReference type="GeneID" id="886805"/>
<dbReference type="KEGG" id="mtu:Rv1366"/>
<dbReference type="KEGG" id="mtv:RVBD_1366"/>
<dbReference type="TubercuList" id="Rv1366"/>
<dbReference type="eggNOG" id="COG2357">
    <property type="taxonomic scope" value="Bacteria"/>
</dbReference>
<dbReference type="InParanoid" id="P9WLZ5"/>
<dbReference type="OrthoDB" id="9789634at2"/>
<dbReference type="PhylomeDB" id="P9WLZ5"/>
<dbReference type="Proteomes" id="UP000001584">
    <property type="component" value="Chromosome"/>
</dbReference>
<dbReference type="GO" id="GO:0015969">
    <property type="term" value="P:guanosine tetraphosphate metabolic process"/>
    <property type="evidence" value="ECO:0007669"/>
    <property type="project" value="InterPro"/>
</dbReference>
<dbReference type="CDD" id="cd05399">
    <property type="entry name" value="NT_Rel-Spo_like"/>
    <property type="match status" value="1"/>
</dbReference>
<dbReference type="Gene3D" id="3.30.460.10">
    <property type="entry name" value="Beta Polymerase, domain 2"/>
    <property type="match status" value="1"/>
</dbReference>
<dbReference type="InterPro" id="IPR052366">
    <property type="entry name" value="GTP_Pyrophosphokinase"/>
</dbReference>
<dbReference type="InterPro" id="IPR043519">
    <property type="entry name" value="NT_sf"/>
</dbReference>
<dbReference type="InterPro" id="IPR007685">
    <property type="entry name" value="RelA_SpoT"/>
</dbReference>
<dbReference type="PANTHER" id="PTHR47837">
    <property type="entry name" value="GTP PYROPHOSPHOKINASE YJBM"/>
    <property type="match status" value="1"/>
</dbReference>
<dbReference type="PANTHER" id="PTHR47837:SF1">
    <property type="entry name" value="GTP PYROPHOSPHOKINASE YJBM"/>
    <property type="match status" value="1"/>
</dbReference>
<dbReference type="Pfam" id="PF04607">
    <property type="entry name" value="RelA_SpoT"/>
    <property type="match status" value="1"/>
</dbReference>
<dbReference type="SMART" id="SM00954">
    <property type="entry name" value="RelA_SpoT"/>
    <property type="match status" value="1"/>
</dbReference>
<dbReference type="SUPFAM" id="SSF81301">
    <property type="entry name" value="Nucleotidyltransferase"/>
    <property type="match status" value="1"/>
</dbReference>
<reference key="1">
    <citation type="journal article" date="1998" name="Nature">
        <title>Deciphering the biology of Mycobacterium tuberculosis from the complete genome sequence.</title>
        <authorList>
            <person name="Cole S.T."/>
            <person name="Brosch R."/>
            <person name="Parkhill J."/>
            <person name="Garnier T."/>
            <person name="Churcher C.M."/>
            <person name="Harris D.E."/>
            <person name="Gordon S.V."/>
            <person name="Eiglmeier K."/>
            <person name="Gas S."/>
            <person name="Barry C.E. III"/>
            <person name="Tekaia F."/>
            <person name="Badcock K."/>
            <person name="Basham D."/>
            <person name="Brown D."/>
            <person name="Chillingworth T."/>
            <person name="Connor R."/>
            <person name="Davies R.M."/>
            <person name="Devlin K."/>
            <person name="Feltwell T."/>
            <person name="Gentles S."/>
            <person name="Hamlin N."/>
            <person name="Holroyd S."/>
            <person name="Hornsby T."/>
            <person name="Jagels K."/>
            <person name="Krogh A."/>
            <person name="McLean J."/>
            <person name="Moule S."/>
            <person name="Murphy L.D."/>
            <person name="Oliver S."/>
            <person name="Osborne J."/>
            <person name="Quail M.A."/>
            <person name="Rajandream M.A."/>
            <person name="Rogers J."/>
            <person name="Rutter S."/>
            <person name="Seeger K."/>
            <person name="Skelton S."/>
            <person name="Squares S."/>
            <person name="Squares R."/>
            <person name="Sulston J.E."/>
            <person name="Taylor K."/>
            <person name="Whitehead S."/>
            <person name="Barrell B.G."/>
        </authorList>
    </citation>
    <scope>NUCLEOTIDE SEQUENCE [LARGE SCALE GENOMIC DNA]</scope>
    <source>
        <strain>ATCC 25618 / H37Rv</strain>
    </source>
</reference>
<reference key="2">
    <citation type="journal article" date="2011" name="Mol. Cell. Proteomics">
        <title>Proteogenomic analysis of Mycobacterium tuberculosis by high resolution mass spectrometry.</title>
        <authorList>
            <person name="Kelkar D.S."/>
            <person name="Kumar D."/>
            <person name="Kumar P."/>
            <person name="Balakrishnan L."/>
            <person name="Muthusamy B."/>
            <person name="Yadav A.K."/>
            <person name="Shrivastava P."/>
            <person name="Marimuthu A."/>
            <person name="Anand S."/>
            <person name="Sundaram H."/>
            <person name="Kingsbury R."/>
            <person name="Harsha H.C."/>
            <person name="Nair B."/>
            <person name="Prasad T.S."/>
            <person name="Chauhan D.S."/>
            <person name="Katoch K."/>
            <person name="Katoch V.M."/>
            <person name="Kumar P."/>
            <person name="Chaerkady R."/>
            <person name="Ramachandran S."/>
            <person name="Dash D."/>
            <person name="Pandey A."/>
        </authorList>
    </citation>
    <scope>IDENTIFICATION BY MASS SPECTROMETRY [LARGE SCALE ANALYSIS]</scope>
    <source>
        <strain>ATCC 25618 / H37Rv</strain>
    </source>
</reference>
<accession>P9WLZ5</accession>
<accession>L0T966</accession>
<accession>P64833</accession>
<accession>Q11036</accession>
<organism>
    <name type="scientific">Mycobacterium tuberculosis (strain ATCC 25618 / H37Rv)</name>
    <dbReference type="NCBI Taxonomy" id="83332"/>
    <lineage>
        <taxon>Bacteria</taxon>
        <taxon>Bacillati</taxon>
        <taxon>Actinomycetota</taxon>
        <taxon>Actinomycetes</taxon>
        <taxon>Mycobacteriales</taxon>
        <taxon>Mycobacteriaceae</taxon>
        <taxon>Mycobacterium</taxon>
        <taxon>Mycobacterium tuberculosis complex</taxon>
    </lineage>
</organism>
<gene>
    <name type="ordered locus">Rv1366</name>
    <name type="ORF">MTCY02B10.30</name>
</gene>
<keyword id="KW-1185">Reference proteome</keyword>
<sequence>MVVALVGSAIVDLHSRPPWSNNAVRRLGVALRDGVDPPVDCPSYAEVMLWHADLAAEVQDRIEGRSWSASELLVTSRAKSQDTLLAKLRRRPYLQLNTIQDIAGVRIDADLLLGEQTRLAREIADHFGADQPAIHDLRDHPHAGYRAVHVWLRLPAGRVEIQIRTILQSLWANFYELLADAYGRGIRYDERPEQLAAGVVPAQLQELVGVMQDASADLAMHEAEWQHCAEIEYPGQRAMALGEASKNKATVLATTKFRLERAINEAESAGGGG</sequence>
<name>Y1366_MYCTU</name>
<feature type="chain" id="PRO_0000103834" description="Uncharacterized protein Rv1366">
    <location>
        <begin position="1"/>
        <end position="273"/>
    </location>
</feature>
<proteinExistence type="evidence at protein level"/>